<gene>
    <name evidence="1" type="primary">mtlD</name>
    <name type="ordered locus">EcolC_0112</name>
</gene>
<name>MTLD_ECOLC</name>
<protein>
    <recommendedName>
        <fullName evidence="1">Mannitol-1-phosphate 5-dehydrogenase</fullName>
        <ecNumber evidence="1">1.1.1.17</ecNumber>
    </recommendedName>
</protein>
<keyword id="KW-0007">Acetylation</keyword>
<keyword id="KW-0520">NAD</keyword>
<keyword id="KW-0560">Oxidoreductase</keyword>
<sequence length="382" mass="41140">MKALHFGAGNIGRGFIGKLLADAGIQLTFADVNQVVLDALNARHSYQVHVVGETEQVDTVSGVDAVSSIGDDVVDLIAQVDLVTTAVGPVVLERIAPAIAKGLVKRKEQGNESPLNIIACENMVRGTTQLKGHVMNALPEDAKAWVEEHVGFVDSAVDRIVPPSASATNDPLEVTVETFSEWIVDKTQFKGALPNIPGMELTDNLMAFVERKLFTLNTGHAITAYLGKLAGHQTIRDAILDEKIRAVVKGAMEESGAVLIKRYGFDADKHAAYIQKILGRFENPYLKDDVERVGRQPLRKLSAGDRLIKPLLGTLEYSLPHKNLIQGIAGAMHFRSEDDPQAQELAALIADKGPQAALAQISGLDANSEVVSEAVTAYKAMQ</sequence>
<dbReference type="EC" id="1.1.1.17" evidence="1"/>
<dbReference type="EMBL" id="CP000946">
    <property type="protein sequence ID" value="ACA75796.1"/>
    <property type="molecule type" value="Genomic_DNA"/>
</dbReference>
<dbReference type="RefSeq" id="WP_000645405.1">
    <property type="nucleotide sequence ID" value="NZ_MTFT01000034.1"/>
</dbReference>
<dbReference type="SMR" id="B1IZJ2"/>
<dbReference type="KEGG" id="ecl:EcolC_0112"/>
<dbReference type="HOGENOM" id="CLU_036089_2_0_6"/>
<dbReference type="GO" id="GO:0005829">
    <property type="term" value="C:cytosol"/>
    <property type="evidence" value="ECO:0007669"/>
    <property type="project" value="TreeGrafter"/>
</dbReference>
<dbReference type="GO" id="GO:0008926">
    <property type="term" value="F:mannitol-1-phosphate 5-dehydrogenase activity"/>
    <property type="evidence" value="ECO:0007669"/>
    <property type="project" value="UniProtKB-UniRule"/>
</dbReference>
<dbReference type="GO" id="GO:0019592">
    <property type="term" value="P:mannitol catabolic process"/>
    <property type="evidence" value="ECO:0007669"/>
    <property type="project" value="TreeGrafter"/>
</dbReference>
<dbReference type="FunFam" id="1.10.1040.10:FF:000009">
    <property type="entry name" value="Mannitol-1-phosphate 5-dehydrogenase"/>
    <property type="match status" value="1"/>
</dbReference>
<dbReference type="FunFam" id="3.40.50.720:FF:000075">
    <property type="entry name" value="Mannitol-1-phosphate 5-dehydrogenase"/>
    <property type="match status" value="1"/>
</dbReference>
<dbReference type="Gene3D" id="1.10.1040.10">
    <property type="entry name" value="N-(1-d-carboxylethyl)-l-norvaline Dehydrogenase, domain 2"/>
    <property type="match status" value="1"/>
</dbReference>
<dbReference type="Gene3D" id="3.40.50.720">
    <property type="entry name" value="NAD(P)-binding Rossmann-like Domain"/>
    <property type="match status" value="1"/>
</dbReference>
<dbReference type="HAMAP" id="MF_00196">
    <property type="entry name" value="Mannitol_dehydrog"/>
    <property type="match status" value="1"/>
</dbReference>
<dbReference type="InterPro" id="IPR008927">
    <property type="entry name" value="6-PGluconate_DH-like_C_sf"/>
</dbReference>
<dbReference type="InterPro" id="IPR013328">
    <property type="entry name" value="6PGD_dom2"/>
</dbReference>
<dbReference type="InterPro" id="IPR023028">
    <property type="entry name" value="Mannitol_1_phos_5_DH"/>
</dbReference>
<dbReference type="InterPro" id="IPR000669">
    <property type="entry name" value="Mannitol_DH"/>
</dbReference>
<dbReference type="InterPro" id="IPR013118">
    <property type="entry name" value="Mannitol_DH_C"/>
</dbReference>
<dbReference type="InterPro" id="IPR023027">
    <property type="entry name" value="Mannitol_DH_CS"/>
</dbReference>
<dbReference type="InterPro" id="IPR013131">
    <property type="entry name" value="Mannitol_DH_N"/>
</dbReference>
<dbReference type="InterPro" id="IPR036291">
    <property type="entry name" value="NAD(P)-bd_dom_sf"/>
</dbReference>
<dbReference type="NCBIfam" id="NF002646">
    <property type="entry name" value="PRK02318.1-2"/>
    <property type="match status" value="1"/>
</dbReference>
<dbReference type="NCBIfam" id="NF002647">
    <property type="entry name" value="PRK02318.1-3"/>
    <property type="match status" value="1"/>
</dbReference>
<dbReference type="NCBIfam" id="NF002648">
    <property type="entry name" value="PRK02318.1-4"/>
    <property type="match status" value="1"/>
</dbReference>
<dbReference type="NCBIfam" id="NF002650">
    <property type="entry name" value="PRK02318.2-2"/>
    <property type="match status" value="1"/>
</dbReference>
<dbReference type="NCBIfam" id="NF002652">
    <property type="entry name" value="PRK02318.2-5"/>
    <property type="match status" value="1"/>
</dbReference>
<dbReference type="PANTHER" id="PTHR30524:SF0">
    <property type="entry name" value="ALTRONATE OXIDOREDUCTASE-RELATED"/>
    <property type="match status" value="1"/>
</dbReference>
<dbReference type="PANTHER" id="PTHR30524">
    <property type="entry name" value="MANNITOL-1-PHOSPHATE 5-DEHYDROGENASE"/>
    <property type="match status" value="1"/>
</dbReference>
<dbReference type="Pfam" id="PF01232">
    <property type="entry name" value="Mannitol_dh"/>
    <property type="match status" value="1"/>
</dbReference>
<dbReference type="Pfam" id="PF08125">
    <property type="entry name" value="Mannitol_dh_C"/>
    <property type="match status" value="1"/>
</dbReference>
<dbReference type="PRINTS" id="PR00084">
    <property type="entry name" value="MTLDHDRGNASE"/>
</dbReference>
<dbReference type="SUPFAM" id="SSF48179">
    <property type="entry name" value="6-phosphogluconate dehydrogenase C-terminal domain-like"/>
    <property type="match status" value="1"/>
</dbReference>
<dbReference type="SUPFAM" id="SSF51735">
    <property type="entry name" value="NAD(P)-binding Rossmann-fold domains"/>
    <property type="match status" value="1"/>
</dbReference>
<dbReference type="PROSITE" id="PS00974">
    <property type="entry name" value="MANNITOL_DHGENASE"/>
    <property type="match status" value="1"/>
</dbReference>
<comment type="catalytic activity">
    <reaction evidence="1">
        <text>D-mannitol 1-phosphate + NAD(+) = beta-D-fructose 6-phosphate + NADH + H(+)</text>
        <dbReference type="Rhea" id="RHEA:19661"/>
        <dbReference type="ChEBI" id="CHEBI:15378"/>
        <dbReference type="ChEBI" id="CHEBI:57540"/>
        <dbReference type="ChEBI" id="CHEBI:57634"/>
        <dbReference type="ChEBI" id="CHEBI:57945"/>
        <dbReference type="ChEBI" id="CHEBI:61381"/>
        <dbReference type="EC" id="1.1.1.17"/>
    </reaction>
</comment>
<comment type="similarity">
    <text evidence="1">Belongs to the mannitol dehydrogenase family.</text>
</comment>
<accession>B1IZJ2</accession>
<evidence type="ECO:0000255" key="1">
    <source>
        <dbReference type="HAMAP-Rule" id="MF_00196"/>
    </source>
</evidence>
<reference key="1">
    <citation type="submission" date="2008-02" db="EMBL/GenBank/DDBJ databases">
        <title>Complete sequence of Escherichia coli C str. ATCC 8739.</title>
        <authorList>
            <person name="Copeland A."/>
            <person name="Lucas S."/>
            <person name="Lapidus A."/>
            <person name="Glavina del Rio T."/>
            <person name="Dalin E."/>
            <person name="Tice H."/>
            <person name="Bruce D."/>
            <person name="Goodwin L."/>
            <person name="Pitluck S."/>
            <person name="Kiss H."/>
            <person name="Brettin T."/>
            <person name="Detter J.C."/>
            <person name="Han C."/>
            <person name="Kuske C.R."/>
            <person name="Schmutz J."/>
            <person name="Larimer F."/>
            <person name="Land M."/>
            <person name="Hauser L."/>
            <person name="Kyrpides N."/>
            <person name="Mikhailova N."/>
            <person name="Ingram L."/>
            <person name="Richardson P."/>
        </authorList>
    </citation>
    <scope>NUCLEOTIDE SEQUENCE [LARGE SCALE GENOMIC DNA]</scope>
    <source>
        <strain>ATCC 8739 / DSM 1576 / NBRC 3972 / NCIMB 8545 / WDCM 00012 / Crooks</strain>
    </source>
</reference>
<organism>
    <name type="scientific">Escherichia coli (strain ATCC 8739 / DSM 1576 / NBRC 3972 / NCIMB 8545 / WDCM 00012 / Crooks)</name>
    <dbReference type="NCBI Taxonomy" id="481805"/>
    <lineage>
        <taxon>Bacteria</taxon>
        <taxon>Pseudomonadati</taxon>
        <taxon>Pseudomonadota</taxon>
        <taxon>Gammaproteobacteria</taxon>
        <taxon>Enterobacterales</taxon>
        <taxon>Enterobacteriaceae</taxon>
        <taxon>Escherichia</taxon>
    </lineage>
</organism>
<feature type="chain" id="PRO_1000077682" description="Mannitol-1-phosphate 5-dehydrogenase">
    <location>
        <begin position="1"/>
        <end position="382"/>
    </location>
</feature>
<feature type="binding site" evidence="1">
    <location>
        <begin position="3"/>
        <end position="14"/>
    </location>
    <ligand>
        <name>NAD(+)</name>
        <dbReference type="ChEBI" id="CHEBI:57540"/>
    </ligand>
</feature>
<feature type="modified residue" description="N6-acetyllysine" evidence="1">
    <location>
        <position position="269"/>
    </location>
</feature>
<proteinExistence type="inferred from homology"/>